<sequence>MNVLWGLLGAVAIIAIAFLFSEKKSNIKIRTVIVGLCTQVAFGYIVLKWEAGRAVFLWFSSRVQLLIDYANEGISFIFGPLLKVGDSPAFALSVLPVIIFFSALIAVLYHLKIMQLVFRVIGGGLSKLLGTSKTESLAAAANIFVGQSESPLVIKPLIAGLTRSELFTIMTSGLSAVAGSTLFGYALLGIPIEYLLAASFMAAPAGLVFGKLIIPETEKTQTVKSDFKMDEGEGAANVIDAAAKGASTGLQIALNVGAMLLAFVALIAVVNGILGGAFGLFGLKGVTLESILGYVFSPIAFLIGVPWHEALQAGSYIGQKLVLNEFVAYSNFGSHIGEFSKKTATIISFALCGFANFSSIAIMLGTLGGLAPSRRSDIARLGLKAVLAGTLANLLSAAIAGMFI</sequence>
<dbReference type="EMBL" id="AL009126">
    <property type="protein sequence ID" value="CAB15208.1"/>
    <property type="molecule type" value="Genomic_DNA"/>
</dbReference>
<dbReference type="PIR" id="E70024">
    <property type="entry name" value="E70024"/>
</dbReference>
<dbReference type="RefSeq" id="NP_391098.1">
    <property type="nucleotide sequence ID" value="NC_000964.3"/>
</dbReference>
<dbReference type="RefSeq" id="WP_003243750.1">
    <property type="nucleotide sequence ID" value="NZ_OZ025638.1"/>
</dbReference>
<dbReference type="SMR" id="O32115"/>
<dbReference type="FunCoup" id="O32115">
    <property type="interactions" value="294"/>
</dbReference>
<dbReference type="STRING" id="224308.BSU32180"/>
<dbReference type="PaxDb" id="224308-BSU32180"/>
<dbReference type="EnsemblBacteria" id="CAB15208">
    <property type="protein sequence ID" value="CAB15208"/>
    <property type="gene ID" value="BSU_32180"/>
</dbReference>
<dbReference type="GeneID" id="936517"/>
<dbReference type="KEGG" id="bsu:BSU32180"/>
<dbReference type="PATRIC" id="fig|224308.179.peg.3484"/>
<dbReference type="eggNOG" id="COG1972">
    <property type="taxonomic scope" value="Bacteria"/>
</dbReference>
<dbReference type="InParanoid" id="O32115"/>
<dbReference type="OrthoDB" id="9766455at2"/>
<dbReference type="PhylomeDB" id="O32115"/>
<dbReference type="BioCyc" id="BSUB:BSU32180-MONOMER"/>
<dbReference type="Proteomes" id="UP000001570">
    <property type="component" value="Chromosome"/>
</dbReference>
<dbReference type="GO" id="GO:0005886">
    <property type="term" value="C:plasma membrane"/>
    <property type="evidence" value="ECO:0000318"/>
    <property type="project" value="GO_Central"/>
</dbReference>
<dbReference type="GO" id="GO:0005337">
    <property type="term" value="F:nucleoside transmembrane transporter activity"/>
    <property type="evidence" value="ECO:0000318"/>
    <property type="project" value="GO_Central"/>
</dbReference>
<dbReference type="GO" id="GO:0015293">
    <property type="term" value="F:symporter activity"/>
    <property type="evidence" value="ECO:0000318"/>
    <property type="project" value="GO_Central"/>
</dbReference>
<dbReference type="GO" id="GO:1901642">
    <property type="term" value="P:nucleoside transmembrane transport"/>
    <property type="evidence" value="ECO:0000318"/>
    <property type="project" value="GO_Central"/>
</dbReference>
<dbReference type="InterPro" id="IPR008276">
    <property type="entry name" value="C_nuclsd_transpt"/>
</dbReference>
<dbReference type="InterPro" id="IPR018270">
    <property type="entry name" value="C_nuclsd_transpt_met_bac"/>
</dbReference>
<dbReference type="InterPro" id="IPR011657">
    <property type="entry name" value="CNT_C_dom"/>
</dbReference>
<dbReference type="InterPro" id="IPR002668">
    <property type="entry name" value="CNT_N_dom"/>
</dbReference>
<dbReference type="InterPro" id="IPR011642">
    <property type="entry name" value="Gate_dom"/>
</dbReference>
<dbReference type="NCBIfam" id="TIGR00804">
    <property type="entry name" value="nupC"/>
    <property type="match status" value="1"/>
</dbReference>
<dbReference type="PANTHER" id="PTHR10590">
    <property type="entry name" value="SODIUM/NUCLEOSIDE COTRANSPORTER"/>
    <property type="match status" value="1"/>
</dbReference>
<dbReference type="PANTHER" id="PTHR10590:SF4">
    <property type="entry name" value="SOLUTE CARRIER FAMILY 28 MEMBER 3"/>
    <property type="match status" value="1"/>
</dbReference>
<dbReference type="Pfam" id="PF07670">
    <property type="entry name" value="Gate"/>
    <property type="match status" value="1"/>
</dbReference>
<dbReference type="Pfam" id="PF07662">
    <property type="entry name" value="Nucleos_tra2_C"/>
    <property type="match status" value="1"/>
</dbReference>
<dbReference type="Pfam" id="PF01773">
    <property type="entry name" value="Nucleos_tra2_N"/>
    <property type="match status" value="1"/>
</dbReference>
<name>YUTK_BACSU</name>
<feature type="chain" id="PRO_0000360054" description="Uncharacterized transporter YutK">
    <location>
        <begin position="1"/>
        <end position="404"/>
    </location>
</feature>
<feature type="transmembrane region" description="Helical" evidence="1">
    <location>
        <begin position="1"/>
        <end position="21"/>
    </location>
</feature>
<feature type="transmembrane region" description="Helical" evidence="1">
    <location>
        <begin position="32"/>
        <end position="52"/>
    </location>
</feature>
<feature type="transmembrane region" description="Helical" evidence="1">
    <location>
        <begin position="89"/>
        <end position="109"/>
    </location>
</feature>
<feature type="transmembrane region" description="Helical" evidence="1">
    <location>
        <begin position="182"/>
        <end position="202"/>
    </location>
</feature>
<feature type="transmembrane region" description="Helical" evidence="1">
    <location>
        <begin position="261"/>
        <end position="281"/>
    </location>
</feature>
<feature type="transmembrane region" description="Helical" evidence="1">
    <location>
        <begin position="285"/>
        <end position="305"/>
    </location>
</feature>
<feature type="transmembrane region" description="Helical" evidence="1">
    <location>
        <begin position="344"/>
        <end position="364"/>
    </location>
</feature>
<feature type="transmembrane region" description="Helical" evidence="1">
    <location>
        <begin position="384"/>
        <end position="404"/>
    </location>
</feature>
<comment type="subcellular location">
    <subcellularLocation>
        <location evidence="2">Cell membrane</location>
        <topology evidence="2">Multi-pass membrane protein</topology>
    </subcellularLocation>
</comment>
<comment type="similarity">
    <text evidence="2">Belongs to the concentrative nucleoside transporter (CNT) (TC 2.A.41) family.</text>
</comment>
<evidence type="ECO:0000255" key="1"/>
<evidence type="ECO:0000305" key="2"/>
<organism>
    <name type="scientific">Bacillus subtilis (strain 168)</name>
    <dbReference type="NCBI Taxonomy" id="224308"/>
    <lineage>
        <taxon>Bacteria</taxon>
        <taxon>Bacillati</taxon>
        <taxon>Bacillota</taxon>
        <taxon>Bacilli</taxon>
        <taxon>Bacillales</taxon>
        <taxon>Bacillaceae</taxon>
        <taxon>Bacillus</taxon>
    </lineage>
</organism>
<gene>
    <name type="primary">yutK</name>
    <name type="ordered locus">BSU32180</name>
</gene>
<keyword id="KW-1003">Cell membrane</keyword>
<keyword id="KW-0472">Membrane</keyword>
<keyword id="KW-1185">Reference proteome</keyword>
<keyword id="KW-0812">Transmembrane</keyword>
<keyword id="KW-1133">Transmembrane helix</keyword>
<keyword id="KW-0813">Transport</keyword>
<proteinExistence type="inferred from homology"/>
<reference key="1">
    <citation type="journal article" date="1997" name="Nature">
        <title>The complete genome sequence of the Gram-positive bacterium Bacillus subtilis.</title>
        <authorList>
            <person name="Kunst F."/>
            <person name="Ogasawara N."/>
            <person name="Moszer I."/>
            <person name="Albertini A.M."/>
            <person name="Alloni G."/>
            <person name="Azevedo V."/>
            <person name="Bertero M.G."/>
            <person name="Bessieres P."/>
            <person name="Bolotin A."/>
            <person name="Borchert S."/>
            <person name="Borriss R."/>
            <person name="Boursier L."/>
            <person name="Brans A."/>
            <person name="Braun M."/>
            <person name="Brignell S.C."/>
            <person name="Bron S."/>
            <person name="Brouillet S."/>
            <person name="Bruschi C.V."/>
            <person name="Caldwell B."/>
            <person name="Capuano V."/>
            <person name="Carter N.M."/>
            <person name="Choi S.-K."/>
            <person name="Codani J.-J."/>
            <person name="Connerton I.F."/>
            <person name="Cummings N.J."/>
            <person name="Daniel R.A."/>
            <person name="Denizot F."/>
            <person name="Devine K.M."/>
            <person name="Duesterhoeft A."/>
            <person name="Ehrlich S.D."/>
            <person name="Emmerson P.T."/>
            <person name="Entian K.-D."/>
            <person name="Errington J."/>
            <person name="Fabret C."/>
            <person name="Ferrari E."/>
            <person name="Foulger D."/>
            <person name="Fritz C."/>
            <person name="Fujita M."/>
            <person name="Fujita Y."/>
            <person name="Fuma S."/>
            <person name="Galizzi A."/>
            <person name="Galleron N."/>
            <person name="Ghim S.-Y."/>
            <person name="Glaser P."/>
            <person name="Goffeau A."/>
            <person name="Golightly E.J."/>
            <person name="Grandi G."/>
            <person name="Guiseppi G."/>
            <person name="Guy B.J."/>
            <person name="Haga K."/>
            <person name="Haiech J."/>
            <person name="Harwood C.R."/>
            <person name="Henaut A."/>
            <person name="Hilbert H."/>
            <person name="Holsappel S."/>
            <person name="Hosono S."/>
            <person name="Hullo M.-F."/>
            <person name="Itaya M."/>
            <person name="Jones L.-M."/>
            <person name="Joris B."/>
            <person name="Karamata D."/>
            <person name="Kasahara Y."/>
            <person name="Klaerr-Blanchard M."/>
            <person name="Klein C."/>
            <person name="Kobayashi Y."/>
            <person name="Koetter P."/>
            <person name="Koningstein G."/>
            <person name="Krogh S."/>
            <person name="Kumano M."/>
            <person name="Kurita K."/>
            <person name="Lapidus A."/>
            <person name="Lardinois S."/>
            <person name="Lauber J."/>
            <person name="Lazarevic V."/>
            <person name="Lee S.-M."/>
            <person name="Levine A."/>
            <person name="Liu H."/>
            <person name="Masuda S."/>
            <person name="Mauel C."/>
            <person name="Medigue C."/>
            <person name="Medina N."/>
            <person name="Mellado R.P."/>
            <person name="Mizuno M."/>
            <person name="Moestl D."/>
            <person name="Nakai S."/>
            <person name="Noback M."/>
            <person name="Noone D."/>
            <person name="O'Reilly M."/>
            <person name="Ogawa K."/>
            <person name="Ogiwara A."/>
            <person name="Oudega B."/>
            <person name="Park S.-H."/>
            <person name="Parro V."/>
            <person name="Pohl T.M."/>
            <person name="Portetelle D."/>
            <person name="Porwollik S."/>
            <person name="Prescott A.M."/>
            <person name="Presecan E."/>
            <person name="Pujic P."/>
            <person name="Purnelle B."/>
            <person name="Rapoport G."/>
            <person name="Rey M."/>
            <person name="Reynolds S."/>
            <person name="Rieger M."/>
            <person name="Rivolta C."/>
            <person name="Rocha E."/>
            <person name="Roche B."/>
            <person name="Rose M."/>
            <person name="Sadaie Y."/>
            <person name="Sato T."/>
            <person name="Scanlan E."/>
            <person name="Schleich S."/>
            <person name="Schroeter R."/>
            <person name="Scoffone F."/>
            <person name="Sekiguchi J."/>
            <person name="Sekowska A."/>
            <person name="Seror S.J."/>
            <person name="Serror P."/>
            <person name="Shin B.-S."/>
            <person name="Soldo B."/>
            <person name="Sorokin A."/>
            <person name="Tacconi E."/>
            <person name="Takagi T."/>
            <person name="Takahashi H."/>
            <person name="Takemaru K."/>
            <person name="Takeuchi M."/>
            <person name="Tamakoshi A."/>
            <person name="Tanaka T."/>
            <person name="Terpstra P."/>
            <person name="Tognoni A."/>
            <person name="Tosato V."/>
            <person name="Uchiyama S."/>
            <person name="Vandenbol M."/>
            <person name="Vannier F."/>
            <person name="Vassarotti A."/>
            <person name="Viari A."/>
            <person name="Wambutt R."/>
            <person name="Wedler E."/>
            <person name="Wedler H."/>
            <person name="Weitzenegger T."/>
            <person name="Winters P."/>
            <person name="Wipat A."/>
            <person name="Yamamoto H."/>
            <person name="Yamane K."/>
            <person name="Yasumoto K."/>
            <person name="Yata K."/>
            <person name="Yoshida K."/>
            <person name="Yoshikawa H.-F."/>
            <person name="Zumstein E."/>
            <person name="Yoshikawa H."/>
            <person name="Danchin A."/>
        </authorList>
    </citation>
    <scope>NUCLEOTIDE SEQUENCE [LARGE SCALE GENOMIC DNA]</scope>
    <source>
        <strain>168</strain>
    </source>
</reference>
<accession>O32115</accession>
<protein>
    <recommendedName>
        <fullName>Uncharacterized transporter YutK</fullName>
    </recommendedName>
</protein>